<feature type="chain" id="PRO_0000320586" description="Coiled-coil domain-containing protein 152">
    <location>
        <begin position="1"/>
        <end position="254"/>
    </location>
</feature>
<feature type="coiled-coil region" evidence="1">
    <location>
        <begin position="61"/>
        <end position="246"/>
    </location>
</feature>
<feature type="splice variant" id="VSP_056904" description="In isoform 2." evidence="3">
    <location>
        <begin position="87"/>
        <end position="142"/>
    </location>
</feature>
<feature type="sequence variant" id="VAR_059596" description="In dbSNP:rs6879044.">
    <original>R</original>
    <variation>H</variation>
    <location>
        <position position="251"/>
    </location>
</feature>
<feature type="sequence conflict" description="In Ref. 4; AAH39102." evidence="4" ref="4">
    <original>E</original>
    <variation>V</variation>
    <location>
        <position position="173"/>
    </location>
</feature>
<feature type="sequence conflict" description="In Ref. 4; AAH39102." evidence="4" ref="4">
    <original>Q</original>
    <variation>K</variation>
    <location>
        <position position="220"/>
    </location>
</feature>
<proteinExistence type="evidence at protein level"/>
<name>CC152_HUMAN</name>
<organism>
    <name type="scientific">Homo sapiens</name>
    <name type="common">Human</name>
    <dbReference type="NCBI Taxonomy" id="9606"/>
    <lineage>
        <taxon>Eukaryota</taxon>
        <taxon>Metazoa</taxon>
        <taxon>Chordata</taxon>
        <taxon>Craniata</taxon>
        <taxon>Vertebrata</taxon>
        <taxon>Euteleostomi</taxon>
        <taxon>Mammalia</taxon>
        <taxon>Eutheria</taxon>
        <taxon>Euarchontoglires</taxon>
        <taxon>Primates</taxon>
        <taxon>Haplorrhini</taxon>
        <taxon>Catarrhini</taxon>
        <taxon>Hominidae</taxon>
        <taxon>Homo</taxon>
    </lineage>
</organism>
<sequence>MDQSSEGCMKKISSVNLDKLINDFSQIEKKMVETNGKNNILDIQLEKSNCLLKVMQAKEVSIKEECATLHNIIKGLQQTIEYQQNLKGENEQLKISADLIKEKLKSHEQEYKNNIAKLVSEMKIKEEGYKKEISKLYQDMQRKVELNEEKHKELIEKKEMEISELNAKLRSQEKEKQNEIIKLQLEFDAKLARVQTKSKSYQDSTVLPQSIYRRKLQHFQEEKNKEIAILRNTIRDLEQRLSVGKDSHLKRRRF</sequence>
<evidence type="ECO:0000255" key="1"/>
<evidence type="ECO:0000269" key="2">
    <source>
    </source>
</evidence>
<evidence type="ECO:0000303" key="3">
    <source>
    </source>
</evidence>
<evidence type="ECO:0000305" key="4"/>
<dbReference type="EMBL" id="AK127368">
    <property type="protein sequence ID" value="BAG54496.1"/>
    <property type="molecule type" value="mRNA"/>
</dbReference>
<dbReference type="EMBL" id="AK303469">
    <property type="protein sequence ID" value="BAG64509.1"/>
    <property type="molecule type" value="mRNA"/>
</dbReference>
<dbReference type="EMBL" id="AC008945">
    <property type="status" value="NOT_ANNOTATED_CDS"/>
    <property type="molecule type" value="Genomic_DNA"/>
</dbReference>
<dbReference type="EMBL" id="AC113368">
    <property type="status" value="NOT_ANNOTATED_CDS"/>
    <property type="molecule type" value="Genomic_DNA"/>
</dbReference>
<dbReference type="EMBL" id="CH471119">
    <property type="protein sequence ID" value="EAW56024.1"/>
    <property type="molecule type" value="Genomic_DNA"/>
</dbReference>
<dbReference type="EMBL" id="BC039102">
    <property type="protein sequence ID" value="AAH39102.1"/>
    <property type="status" value="ALT_INIT"/>
    <property type="molecule type" value="mRNA"/>
</dbReference>
<dbReference type="EMBL" id="AY947526">
    <property type="protein sequence ID" value="AAX21787.1"/>
    <property type="molecule type" value="mRNA"/>
</dbReference>
<dbReference type="CCDS" id="CCDS47203.1">
    <molecule id="Q4G0S7-1"/>
</dbReference>
<dbReference type="RefSeq" id="NP_001128320.1">
    <molecule id="Q4G0S7-1"/>
    <property type="nucleotide sequence ID" value="NM_001134848.2"/>
</dbReference>
<dbReference type="RefSeq" id="XP_054207346.1">
    <molecule id="Q4G0S7-1"/>
    <property type="nucleotide sequence ID" value="XM_054351371.1"/>
</dbReference>
<dbReference type="SMR" id="Q4G0S7"/>
<dbReference type="BioGRID" id="934298">
    <property type="interactions" value="5"/>
</dbReference>
<dbReference type="FunCoup" id="Q4G0S7">
    <property type="interactions" value="5"/>
</dbReference>
<dbReference type="IntAct" id="Q4G0S7">
    <property type="interactions" value="4"/>
</dbReference>
<dbReference type="STRING" id="9606.ENSP00000354888"/>
<dbReference type="iPTMnet" id="Q4G0S7"/>
<dbReference type="PhosphoSitePlus" id="Q4G0S7"/>
<dbReference type="BioMuta" id="CCDC152"/>
<dbReference type="DMDM" id="296439416"/>
<dbReference type="jPOST" id="Q4G0S7"/>
<dbReference type="MassIVE" id="Q4G0S7"/>
<dbReference type="PaxDb" id="9606-ENSP00000354888"/>
<dbReference type="PeptideAtlas" id="Q4G0S7"/>
<dbReference type="ProteomicsDB" id="5689"/>
<dbReference type="ProteomicsDB" id="62125">
    <molecule id="Q4G0S7-1"/>
</dbReference>
<dbReference type="Antibodypedia" id="49882">
    <property type="antibodies" value="13 antibodies from 7 providers"/>
</dbReference>
<dbReference type="DNASU" id="100129792"/>
<dbReference type="Ensembl" id="ENST00000361970.10">
    <molecule id="Q4G0S7-1"/>
    <property type="protein sequence ID" value="ENSP00000354888.5"/>
    <property type="gene ID" value="ENSG00000198865.10"/>
</dbReference>
<dbReference type="Ensembl" id="ENST00000388827.4">
    <molecule id="Q4G0S7-2"/>
    <property type="protein sequence ID" value="ENSP00000373479.4"/>
    <property type="gene ID" value="ENSG00000198865.10"/>
</dbReference>
<dbReference type="GeneID" id="100129792"/>
<dbReference type="KEGG" id="hsa:100129792"/>
<dbReference type="MANE-Select" id="ENST00000361970.10">
    <property type="protein sequence ID" value="ENSP00000354888.5"/>
    <property type="RefSeq nucleotide sequence ID" value="NM_001134848.2"/>
    <property type="RefSeq protein sequence ID" value="NP_001128320.1"/>
</dbReference>
<dbReference type="UCSC" id="uc003jmx.4">
    <molecule id="Q4G0S7-1"/>
    <property type="organism name" value="human"/>
</dbReference>
<dbReference type="AGR" id="HGNC:34438"/>
<dbReference type="CTD" id="100129792"/>
<dbReference type="DisGeNET" id="100129792"/>
<dbReference type="GeneCards" id="CCDC152"/>
<dbReference type="HGNC" id="HGNC:34438">
    <property type="gene designation" value="CCDC152"/>
</dbReference>
<dbReference type="HPA" id="ENSG00000198865">
    <property type="expression patterns" value="Tissue enriched (liver)"/>
</dbReference>
<dbReference type="neXtProt" id="NX_Q4G0S7"/>
<dbReference type="OpenTargets" id="ENSG00000198865"/>
<dbReference type="PharmGKB" id="PA162381615"/>
<dbReference type="VEuPathDB" id="HostDB:ENSG00000198865"/>
<dbReference type="eggNOG" id="ENOG502QRE3">
    <property type="taxonomic scope" value="Eukaryota"/>
</dbReference>
<dbReference type="GeneTree" id="ENSGT00390000010075"/>
<dbReference type="HOGENOM" id="CLU_090538_1_0_1"/>
<dbReference type="InParanoid" id="Q4G0S7"/>
<dbReference type="OMA" id="MTKLNCV"/>
<dbReference type="OrthoDB" id="10053382at2759"/>
<dbReference type="PAN-GO" id="Q4G0S7">
    <property type="GO annotations" value="0 GO annotations based on evolutionary models"/>
</dbReference>
<dbReference type="PhylomeDB" id="Q4G0S7"/>
<dbReference type="TreeFam" id="TF350487"/>
<dbReference type="PathwayCommons" id="Q4G0S7"/>
<dbReference type="SignaLink" id="Q4G0S7"/>
<dbReference type="BioGRID-ORCS" id="100129792">
    <property type="hits" value="37 hits in 1144 CRISPR screens"/>
</dbReference>
<dbReference type="ChiTaRS" id="CCDC152">
    <property type="organism name" value="human"/>
</dbReference>
<dbReference type="GenomeRNAi" id="100129792"/>
<dbReference type="Pharos" id="Q4G0S7">
    <property type="development level" value="Tdark"/>
</dbReference>
<dbReference type="PRO" id="PR:Q4G0S7"/>
<dbReference type="Proteomes" id="UP000005640">
    <property type="component" value="Chromosome 5"/>
</dbReference>
<dbReference type="RNAct" id="Q4G0S7">
    <property type="molecule type" value="protein"/>
</dbReference>
<dbReference type="Bgee" id="ENSG00000198865">
    <property type="expression patterns" value="Expressed in pancreatic ductal cell and 193 other cell types or tissues"/>
</dbReference>
<dbReference type="ExpressionAtlas" id="Q4G0S7">
    <property type="expression patterns" value="baseline and differential"/>
</dbReference>
<dbReference type="InterPro" id="IPR038827">
    <property type="entry name" value="CCDC152"/>
</dbReference>
<dbReference type="PANTHER" id="PTHR35253">
    <property type="entry name" value="COILED-COIL DOMAIN-CONTAINING PROTEIN 152"/>
    <property type="match status" value="1"/>
</dbReference>
<dbReference type="PANTHER" id="PTHR35253:SF1">
    <property type="entry name" value="COILED-COIL DOMAIN-CONTAINING PROTEIN 152"/>
    <property type="match status" value="1"/>
</dbReference>
<accession>Q4G0S7</accession>
<accession>B3KXI4</accession>
<accession>B4E0P7</accession>
<accession>Q5BLP6</accession>
<keyword id="KW-0025">Alternative splicing</keyword>
<keyword id="KW-0175">Coiled coil</keyword>
<keyword id="KW-1267">Proteomics identification</keyword>
<keyword id="KW-1185">Reference proteome</keyword>
<gene>
    <name type="primary">CCDC152</name>
    <name type="ORF">Chr5_400</name>
</gene>
<comment type="interaction">
    <interactant intactId="EBI-18398007">
        <id>Q4G0S7</id>
    </interactant>
    <interactant intactId="EBI-295634">
        <id>Q16543</id>
        <label>CDC37</label>
    </interactant>
    <organismsDiffer>false</organismsDiffer>
    <experiments>3</experiments>
</comment>
<comment type="interaction">
    <interactant intactId="EBI-18398007">
        <id>Q4G0S7</id>
    </interactant>
    <interactant intactId="EBI-2513774">
        <id>O95363</id>
        <label>FARS2</label>
    </interactant>
    <organismsDiffer>false</organismsDiffer>
    <experiments>3</experiments>
</comment>
<comment type="interaction">
    <interactant intactId="EBI-18398007">
        <id>Q4G0S7</id>
    </interactant>
    <interactant intactId="EBI-741158">
        <id>Q96HA8</id>
        <label>NTAQ1</label>
    </interactant>
    <organismsDiffer>false</organismsDiffer>
    <experiments>3</experiments>
</comment>
<comment type="interaction">
    <interactant intactId="EBI-18398007">
        <id>Q4G0S7</id>
    </interactant>
    <interactant intactId="EBI-6116822">
        <id>Q8N3L3</id>
        <label>TXLNB</label>
    </interactant>
    <organismsDiffer>false</organismsDiffer>
    <experiments>3</experiments>
</comment>
<comment type="alternative products">
    <event type="alternative splicing"/>
    <isoform>
        <id>Q4G0S7-1</id>
        <name>1</name>
        <sequence type="displayed"/>
    </isoform>
    <isoform>
        <id>Q4G0S7-2</id>
        <name>2</name>
        <sequence type="described" ref="VSP_056904"/>
    </isoform>
</comment>
<comment type="tissue specificity">
    <text evidence="2">Detected in stomach.</text>
</comment>
<comment type="sequence caution" evidence="4">
    <conflict type="erroneous initiation">
        <sequence resource="EMBL-CDS" id="AAH39102"/>
    </conflict>
    <text>Extended N-terminus.</text>
</comment>
<protein>
    <recommendedName>
        <fullName>Coiled-coil domain-containing protein 152</fullName>
    </recommendedName>
</protein>
<reference key="1">
    <citation type="journal article" date="2004" name="Nat. Genet.">
        <title>Complete sequencing and characterization of 21,243 full-length human cDNAs.</title>
        <authorList>
            <person name="Ota T."/>
            <person name="Suzuki Y."/>
            <person name="Nishikawa T."/>
            <person name="Otsuki T."/>
            <person name="Sugiyama T."/>
            <person name="Irie R."/>
            <person name="Wakamatsu A."/>
            <person name="Hayashi K."/>
            <person name="Sato H."/>
            <person name="Nagai K."/>
            <person name="Kimura K."/>
            <person name="Makita H."/>
            <person name="Sekine M."/>
            <person name="Obayashi M."/>
            <person name="Nishi T."/>
            <person name="Shibahara T."/>
            <person name="Tanaka T."/>
            <person name="Ishii S."/>
            <person name="Yamamoto J."/>
            <person name="Saito K."/>
            <person name="Kawai Y."/>
            <person name="Isono Y."/>
            <person name="Nakamura Y."/>
            <person name="Nagahari K."/>
            <person name="Murakami K."/>
            <person name="Yasuda T."/>
            <person name="Iwayanagi T."/>
            <person name="Wagatsuma M."/>
            <person name="Shiratori A."/>
            <person name="Sudo H."/>
            <person name="Hosoiri T."/>
            <person name="Kaku Y."/>
            <person name="Kodaira H."/>
            <person name="Kondo H."/>
            <person name="Sugawara M."/>
            <person name="Takahashi M."/>
            <person name="Kanda K."/>
            <person name="Yokoi T."/>
            <person name="Furuya T."/>
            <person name="Kikkawa E."/>
            <person name="Omura Y."/>
            <person name="Abe K."/>
            <person name="Kamihara K."/>
            <person name="Katsuta N."/>
            <person name="Sato K."/>
            <person name="Tanikawa M."/>
            <person name="Yamazaki M."/>
            <person name="Ninomiya K."/>
            <person name="Ishibashi T."/>
            <person name="Yamashita H."/>
            <person name="Murakawa K."/>
            <person name="Fujimori K."/>
            <person name="Tanai H."/>
            <person name="Kimata M."/>
            <person name="Watanabe M."/>
            <person name="Hiraoka S."/>
            <person name="Chiba Y."/>
            <person name="Ishida S."/>
            <person name="Ono Y."/>
            <person name="Takiguchi S."/>
            <person name="Watanabe S."/>
            <person name="Yosida M."/>
            <person name="Hotuta T."/>
            <person name="Kusano J."/>
            <person name="Kanehori K."/>
            <person name="Takahashi-Fujii A."/>
            <person name="Hara H."/>
            <person name="Tanase T.-O."/>
            <person name="Nomura Y."/>
            <person name="Togiya S."/>
            <person name="Komai F."/>
            <person name="Hara R."/>
            <person name="Takeuchi K."/>
            <person name="Arita M."/>
            <person name="Imose N."/>
            <person name="Musashino K."/>
            <person name="Yuuki H."/>
            <person name="Oshima A."/>
            <person name="Sasaki N."/>
            <person name="Aotsuka S."/>
            <person name="Yoshikawa Y."/>
            <person name="Matsunawa H."/>
            <person name="Ichihara T."/>
            <person name="Shiohata N."/>
            <person name="Sano S."/>
            <person name="Moriya S."/>
            <person name="Momiyama H."/>
            <person name="Satoh N."/>
            <person name="Takami S."/>
            <person name="Terashima Y."/>
            <person name="Suzuki O."/>
            <person name="Nakagawa S."/>
            <person name="Senoh A."/>
            <person name="Mizoguchi H."/>
            <person name="Goto Y."/>
            <person name="Shimizu F."/>
            <person name="Wakebe H."/>
            <person name="Hishigaki H."/>
            <person name="Watanabe T."/>
            <person name="Sugiyama A."/>
            <person name="Takemoto M."/>
            <person name="Kawakami B."/>
            <person name="Yamazaki M."/>
            <person name="Watanabe K."/>
            <person name="Kumagai A."/>
            <person name="Itakura S."/>
            <person name="Fukuzumi Y."/>
            <person name="Fujimori Y."/>
            <person name="Komiyama M."/>
            <person name="Tashiro H."/>
            <person name="Tanigami A."/>
            <person name="Fujiwara T."/>
            <person name="Ono T."/>
            <person name="Yamada K."/>
            <person name="Fujii Y."/>
            <person name="Ozaki K."/>
            <person name="Hirao M."/>
            <person name="Ohmori Y."/>
            <person name="Kawabata A."/>
            <person name="Hikiji T."/>
            <person name="Kobatake N."/>
            <person name="Inagaki H."/>
            <person name="Ikema Y."/>
            <person name="Okamoto S."/>
            <person name="Okitani R."/>
            <person name="Kawakami T."/>
            <person name="Noguchi S."/>
            <person name="Itoh T."/>
            <person name="Shigeta K."/>
            <person name="Senba T."/>
            <person name="Matsumura K."/>
            <person name="Nakajima Y."/>
            <person name="Mizuno T."/>
            <person name="Morinaga M."/>
            <person name="Sasaki M."/>
            <person name="Togashi T."/>
            <person name="Oyama M."/>
            <person name="Hata H."/>
            <person name="Watanabe M."/>
            <person name="Komatsu T."/>
            <person name="Mizushima-Sugano J."/>
            <person name="Satoh T."/>
            <person name="Shirai Y."/>
            <person name="Takahashi Y."/>
            <person name="Nakagawa K."/>
            <person name="Okumura K."/>
            <person name="Nagase T."/>
            <person name="Nomura N."/>
            <person name="Kikuchi H."/>
            <person name="Masuho Y."/>
            <person name="Yamashita R."/>
            <person name="Nakai K."/>
            <person name="Yada T."/>
            <person name="Nakamura Y."/>
            <person name="Ohara O."/>
            <person name="Isogai T."/>
            <person name="Sugano S."/>
        </authorList>
    </citation>
    <scope>NUCLEOTIDE SEQUENCE [LARGE SCALE MRNA] (ISOFORMS 1 AND 2)</scope>
    <source>
        <tissue>Substantia nigra</tissue>
        <tissue>Thymus</tissue>
    </source>
</reference>
<reference key="2">
    <citation type="journal article" date="2004" name="Nature">
        <title>The DNA sequence and comparative analysis of human chromosome 5.</title>
        <authorList>
            <person name="Schmutz J."/>
            <person name="Martin J."/>
            <person name="Terry A."/>
            <person name="Couronne O."/>
            <person name="Grimwood J."/>
            <person name="Lowry S."/>
            <person name="Gordon L.A."/>
            <person name="Scott D."/>
            <person name="Xie G."/>
            <person name="Huang W."/>
            <person name="Hellsten U."/>
            <person name="Tran-Gyamfi M."/>
            <person name="She X."/>
            <person name="Prabhakar S."/>
            <person name="Aerts A."/>
            <person name="Altherr M."/>
            <person name="Bajorek E."/>
            <person name="Black S."/>
            <person name="Branscomb E."/>
            <person name="Caoile C."/>
            <person name="Challacombe J.F."/>
            <person name="Chan Y.M."/>
            <person name="Denys M."/>
            <person name="Detter J.C."/>
            <person name="Escobar J."/>
            <person name="Flowers D."/>
            <person name="Fotopulos D."/>
            <person name="Glavina T."/>
            <person name="Gomez M."/>
            <person name="Gonzales E."/>
            <person name="Goodstein D."/>
            <person name="Grigoriev I."/>
            <person name="Groza M."/>
            <person name="Hammon N."/>
            <person name="Hawkins T."/>
            <person name="Haydu L."/>
            <person name="Israni S."/>
            <person name="Jett J."/>
            <person name="Kadner K."/>
            <person name="Kimball H."/>
            <person name="Kobayashi A."/>
            <person name="Lopez F."/>
            <person name="Lou Y."/>
            <person name="Martinez D."/>
            <person name="Medina C."/>
            <person name="Morgan J."/>
            <person name="Nandkeshwar R."/>
            <person name="Noonan J.P."/>
            <person name="Pitluck S."/>
            <person name="Pollard M."/>
            <person name="Predki P."/>
            <person name="Priest J."/>
            <person name="Ramirez L."/>
            <person name="Retterer J."/>
            <person name="Rodriguez A."/>
            <person name="Rogers S."/>
            <person name="Salamov A."/>
            <person name="Salazar A."/>
            <person name="Thayer N."/>
            <person name="Tice H."/>
            <person name="Tsai M."/>
            <person name="Ustaszewska A."/>
            <person name="Vo N."/>
            <person name="Wheeler J."/>
            <person name="Wu K."/>
            <person name="Yang J."/>
            <person name="Dickson M."/>
            <person name="Cheng J.-F."/>
            <person name="Eichler E.E."/>
            <person name="Olsen A."/>
            <person name="Pennacchio L.A."/>
            <person name="Rokhsar D.S."/>
            <person name="Richardson P."/>
            <person name="Lucas S.M."/>
            <person name="Myers R.M."/>
            <person name="Rubin E.M."/>
        </authorList>
    </citation>
    <scope>NUCLEOTIDE SEQUENCE [LARGE SCALE GENOMIC DNA]</scope>
</reference>
<reference key="3">
    <citation type="submission" date="2005-07" db="EMBL/GenBank/DDBJ databases">
        <authorList>
            <person name="Mural R.J."/>
            <person name="Istrail S."/>
            <person name="Sutton G.G."/>
            <person name="Florea L."/>
            <person name="Halpern A.L."/>
            <person name="Mobarry C.M."/>
            <person name="Lippert R."/>
            <person name="Walenz B."/>
            <person name="Shatkay H."/>
            <person name="Dew I."/>
            <person name="Miller J.R."/>
            <person name="Flanigan M.J."/>
            <person name="Edwards N.J."/>
            <person name="Bolanos R."/>
            <person name="Fasulo D."/>
            <person name="Halldorsson B.V."/>
            <person name="Hannenhalli S."/>
            <person name="Turner R."/>
            <person name="Yooseph S."/>
            <person name="Lu F."/>
            <person name="Nusskern D.R."/>
            <person name="Shue B.C."/>
            <person name="Zheng X.H."/>
            <person name="Zhong F."/>
            <person name="Delcher A.L."/>
            <person name="Huson D.H."/>
            <person name="Kravitz S.A."/>
            <person name="Mouchard L."/>
            <person name="Reinert K."/>
            <person name="Remington K.A."/>
            <person name="Clark A.G."/>
            <person name="Waterman M.S."/>
            <person name="Eichler E.E."/>
            <person name="Adams M.D."/>
            <person name="Hunkapiller M.W."/>
            <person name="Myers E.W."/>
            <person name="Venter J.C."/>
        </authorList>
    </citation>
    <scope>NUCLEOTIDE SEQUENCE [LARGE SCALE GENOMIC DNA]</scope>
</reference>
<reference key="4">
    <citation type="journal article" date="2004" name="Genome Res.">
        <title>The status, quality, and expansion of the NIH full-length cDNA project: the Mammalian Gene Collection (MGC).</title>
        <authorList>
            <consortium name="The MGC Project Team"/>
        </authorList>
    </citation>
    <scope>NUCLEOTIDE SEQUENCE [LARGE SCALE MRNA] (ISOFORM 1)</scope>
    <source>
        <tissue>Testis</tissue>
    </source>
</reference>
<reference key="5">
    <citation type="journal article" date="2005" name="Nucleic Acids Res.">
        <title>Comparative gene finding in chicken indicates that we are closing in on the set of multi-exonic widely expressed human genes.</title>
        <authorList>
            <person name="Castelo R."/>
            <person name="Reymond A."/>
            <person name="Wyss C."/>
            <person name="Camara F."/>
            <person name="Parra G."/>
            <person name="Antonarakis S.E."/>
            <person name="Guigo R."/>
            <person name="Eyras E."/>
        </authorList>
    </citation>
    <scope>NUCLEOTIDE SEQUENCE [MRNA] OF 1-61 (ISOFORM 1)</scope>
    <scope>TISSUE SPECIFICITY</scope>
</reference>